<comment type="function">
    <text evidence="2 3 4">Plays an important role in maintenance of mitochondrial morphology and in mediating either calcium or potassium/proton antiport (PubMed:18417609, PubMed:32977469, PubMed:35912435, PubMed:36321428). Mediates proton-dependent calcium efflux from mitochondrion (PubMed:35912435, PubMed:36321428). Also functions as an electroneutral mitochondrial proton/potassium exchanger (PubMed:36321428). Required for the mitochondrial tubular network and cristae organization (PubMed:18417609, PubMed:32977469, PubMed:36321428). Involved in apoptotic release of cytochrome c (PubMed:18417609). Inhibits the proteolytic activity of AFG3L2, stimulating respiration and stabilizing respiratory enzymes in actively respiring mitochondria (PubMed:36321428). However, when mitochondria become hyperpolarized, GHITM loses its inhibitory activity toward AFG3L2 and the now the active AFG3L2 turns first on GHITM and, if hyperpolarization persists, on other proteins of the mitochondria, leading to a broad remodeling of the mitochondrial proteome (PubMed:36321428).</text>
</comment>
<comment type="catalytic activity">
    <reaction evidence="3 4">
        <text>Ca(2+)(in) + 2 H(+)(out) = Ca(2+)(out) + 2 H(+)(in)</text>
        <dbReference type="Rhea" id="RHEA:72199"/>
        <dbReference type="ChEBI" id="CHEBI:15378"/>
        <dbReference type="ChEBI" id="CHEBI:29108"/>
    </reaction>
</comment>
<comment type="catalytic activity">
    <reaction evidence="4">
        <text>K(+)(in) + H(+)(out) = K(+)(out) + H(+)(in)</text>
        <dbReference type="Rhea" id="RHEA:29467"/>
        <dbReference type="ChEBI" id="CHEBI:15378"/>
        <dbReference type="ChEBI" id="CHEBI:29103"/>
    </reaction>
</comment>
<comment type="subunit">
    <text evidence="3 4">Interacts with LETM1 (PubMed:36321428). Interacts with AFG3L2 (PubMed:35912435).</text>
</comment>
<comment type="interaction">
    <interactant intactId="EBI-2868909">
        <id>Q9H3K2</id>
    </interactant>
    <interactant intactId="EBI-18304435">
        <id>Q5JX71</id>
        <label>FAM209A</label>
    </interactant>
    <organismsDiffer>false</organismsDiffer>
    <experiments>3</experiments>
</comment>
<comment type="interaction">
    <interactant intactId="EBI-2868909">
        <id>Q9H3K2</id>
    </interactant>
    <interactant intactId="EBI-12175685">
        <id>Q14802-3</id>
        <label>FXYD3</label>
    </interactant>
    <organismsDiffer>false</organismsDiffer>
    <experiments>3</experiments>
</comment>
<comment type="interaction">
    <interactant intactId="EBI-2868909">
        <id>Q9H3K2</id>
    </interactant>
    <interactant intactId="EBI-11305455">
        <id>Q96MG2</id>
        <label>JSRP1</label>
    </interactant>
    <organismsDiffer>false</organismsDiffer>
    <experiments>3</experiments>
</comment>
<comment type="interaction">
    <interactant intactId="EBI-2868909">
        <id>Q9H3K2</id>
    </interactant>
    <interactant intactId="EBI-21591415">
        <id>P13473-2</id>
        <label>LAMP2</label>
    </interactant>
    <organismsDiffer>false</organismsDiffer>
    <experiments>3</experiments>
</comment>
<comment type="interaction">
    <interactant intactId="EBI-2868909">
        <id>Q9H3K2</id>
    </interactant>
    <interactant intactId="EBI-1050125">
        <id>O15173</id>
        <label>PGRMC2</label>
    </interactant>
    <organismsDiffer>false</organismsDiffer>
    <experiments>3</experiments>
</comment>
<comment type="interaction">
    <interactant intactId="EBI-2868909">
        <id>Q9H3K2</id>
    </interactant>
    <interactant intactId="EBI-2623095">
        <id>Q9Y371</id>
        <label>SH3GLB1</label>
    </interactant>
    <organismsDiffer>false</organismsDiffer>
    <experiments>3</experiments>
</comment>
<comment type="interaction">
    <interactant intactId="EBI-2868909">
        <id>Q9H3K2</id>
    </interactant>
    <interactant intactId="EBI-5235340">
        <id>Q7Z699</id>
        <label>SPRED1</label>
    </interactant>
    <organismsDiffer>false</organismsDiffer>
    <experiments>3</experiments>
</comment>
<comment type="interaction">
    <interactant intactId="EBI-2868909">
        <id>Q9H3K2</id>
    </interactant>
    <interactant intactId="EBI-10315004">
        <id>Q9NWH2</id>
        <label>TMEM242</label>
    </interactant>
    <organismsDiffer>false</organismsDiffer>
    <experiments>3</experiments>
</comment>
<comment type="interaction">
    <interactant intactId="EBI-2868909">
        <id>Q9H3K2</id>
    </interactant>
    <interactant intactId="EBI-1048893">
        <id>P54577</id>
        <label>YARS1</label>
    </interactant>
    <organismsDiffer>false</organismsDiffer>
    <experiments>3</experiments>
</comment>
<comment type="interaction">
    <interactant intactId="EBI-2868909">
        <id>Q9H3K2</id>
    </interactant>
    <interactant intactId="EBI-25475917">
        <id>P0DTD3</id>
        <label>9c</label>
    </interactant>
    <organismsDiffer>true</organismsDiffer>
    <experiments>3</experiments>
</comment>
<comment type="interaction">
    <interactant intactId="EBI-2868909">
        <id>Q9H3K2</id>
    </interactant>
    <interactant intactId="EBI-6117196">
        <id>Q6PDS3</id>
        <label>Sarm1</label>
    </interactant>
    <organismsDiffer>true</organismsDiffer>
    <experiments>2</experiments>
</comment>
<comment type="subcellular location">
    <subcellularLocation>
        <location evidence="2">Mitochondrion inner membrane</location>
        <topology evidence="1">Multi-pass membrane protein</topology>
    </subcellularLocation>
</comment>
<comment type="PTM">
    <text evidence="3">Undergoes AFG3L2-mediated proteolytic degradation, upon hyperpolarization of mitochondria.</text>
</comment>
<comment type="similarity">
    <text evidence="5">Belongs to the BI1 family.</text>
</comment>
<gene>
    <name type="primary">GHITM</name>
    <name type="synonym">DERP2</name>
    <name type="synonym">MICS1</name>
    <name type="synonym">TMBIM5</name>
    <name type="ORF">My021</name>
    <name type="ORF">UNQ244/PRO281</name>
</gene>
<accession>Q9H3K2</accession>
<accession>A8K9Z9</accession>
<accession>D3DWE0</accession>
<accession>O95894</accession>
<accession>Q5VT95</accession>
<accession>Q9H0P2</accession>
<organism>
    <name type="scientific">Homo sapiens</name>
    <name type="common">Human</name>
    <dbReference type="NCBI Taxonomy" id="9606"/>
    <lineage>
        <taxon>Eukaryota</taxon>
        <taxon>Metazoa</taxon>
        <taxon>Chordata</taxon>
        <taxon>Craniata</taxon>
        <taxon>Vertebrata</taxon>
        <taxon>Euteleostomi</taxon>
        <taxon>Mammalia</taxon>
        <taxon>Eutheria</taxon>
        <taxon>Euarchontoglires</taxon>
        <taxon>Primates</taxon>
        <taxon>Haplorrhini</taxon>
        <taxon>Catarrhini</taxon>
        <taxon>Hominidae</taxon>
        <taxon>Homo</taxon>
    </lineage>
</organism>
<name>GHITM_HUMAN</name>
<protein>
    <recommendedName>
        <fullName>Growth hormone-inducible transmembrane protein</fullName>
    </recommendedName>
    <alternativeName>
        <fullName>Dermal papilla-derived protein 2</fullName>
    </alternativeName>
    <alternativeName>
        <fullName>Mitochondrial morphology and cristae structure 1</fullName>
        <shortName>MICS1</shortName>
    </alternativeName>
    <alternativeName>
        <fullName>Transmembrane BAX inhibitor motif-containing protein 5</fullName>
    </alternativeName>
</protein>
<keyword id="KW-0053">Apoptosis</keyword>
<keyword id="KW-0472">Membrane</keyword>
<keyword id="KW-0496">Mitochondrion</keyword>
<keyword id="KW-0999">Mitochondrion inner membrane</keyword>
<keyword id="KW-1267">Proteomics identification</keyword>
<keyword id="KW-1185">Reference proteome</keyword>
<keyword id="KW-0809">Transit peptide</keyword>
<keyword id="KW-0812">Transmembrane</keyword>
<keyword id="KW-1133">Transmembrane helix</keyword>
<feature type="transit peptide" description="Mitochondrion" evidence="1">
    <location>
        <begin position="1"/>
        <end position="45"/>
    </location>
</feature>
<feature type="chain" id="PRO_0000179119" description="Growth hormone-inducible transmembrane protein">
    <location>
        <begin position="46"/>
        <end position="345"/>
    </location>
</feature>
<feature type="topological domain" description="Mitochondrial matrix" evidence="1">
    <location>
        <begin position="46"/>
        <end position="82"/>
    </location>
</feature>
<feature type="transmembrane region" description="Helical" evidence="1">
    <location>
        <begin position="83"/>
        <end position="103"/>
    </location>
</feature>
<feature type="topological domain" description="Mitochondrial intermembrane" evidence="1">
    <location>
        <begin position="104"/>
        <end position="125"/>
    </location>
</feature>
<feature type="transmembrane region" description="Helical" evidence="1">
    <location>
        <begin position="126"/>
        <end position="146"/>
    </location>
</feature>
<feature type="topological domain" description="Mitochondrial matrix" evidence="1">
    <location>
        <begin position="147"/>
        <end position="159"/>
    </location>
</feature>
<feature type="transmembrane region" description="Helical" evidence="1">
    <location>
        <begin position="160"/>
        <end position="180"/>
    </location>
</feature>
<feature type="topological domain" description="Mitochondrial intermembrane" evidence="1">
    <location>
        <begin position="181"/>
        <end position="190"/>
    </location>
</feature>
<feature type="transmembrane region" description="Helical" evidence="1">
    <location>
        <begin position="191"/>
        <end position="211"/>
    </location>
</feature>
<feature type="topological domain" description="Mitochondrial matrix" evidence="1">
    <location>
        <begin position="212"/>
        <end position="213"/>
    </location>
</feature>
<feature type="transmembrane region" description="Helical" evidence="1">
    <location>
        <begin position="214"/>
        <end position="234"/>
    </location>
</feature>
<feature type="topological domain" description="Mitochondrial intermembrane" evidence="1">
    <location>
        <begin position="235"/>
        <end position="244"/>
    </location>
</feature>
<feature type="transmembrane region" description="Helical" evidence="1">
    <location>
        <begin position="245"/>
        <end position="265"/>
    </location>
</feature>
<feature type="topological domain" description="Mitochondrial matrix" evidence="1">
    <location>
        <begin position="266"/>
        <end position="271"/>
    </location>
</feature>
<feature type="transmembrane region" description="Helical" evidence="1">
    <location>
        <begin position="272"/>
        <end position="292"/>
    </location>
</feature>
<feature type="topological domain" description="Mitochondrial intermembrane" evidence="1">
    <location>
        <begin position="293"/>
        <end position="345"/>
    </location>
</feature>
<feature type="sequence conflict" description="In Ref. 4; CAB66648." evidence="5" ref="4">
    <original>A</original>
    <variation>V</variation>
    <location>
        <position position="4"/>
    </location>
</feature>
<feature type="sequence conflict" description="In Ref. 3; AAG43135." evidence="5" ref="3">
    <original>E</original>
    <variation>G</variation>
    <location>
        <position position="64"/>
    </location>
</feature>
<feature type="sequence conflict" description="In Ref. 4; CAB66648." evidence="5" ref="4">
    <original>I</original>
    <variation>M</variation>
    <location>
        <position position="74"/>
    </location>
</feature>
<feature type="sequence conflict" description="In Ref. 4; CAB66648." evidence="5" ref="4">
    <original>Q</original>
    <variation>R</variation>
    <location>
        <position position="118"/>
    </location>
</feature>
<dbReference type="EMBL" id="AB009685">
    <property type="protein sequence ID" value="BAA93049.1"/>
    <property type="molecule type" value="mRNA"/>
</dbReference>
<dbReference type="EMBL" id="AF131820">
    <property type="protein sequence ID" value="AAD20052.1"/>
    <property type="molecule type" value="mRNA"/>
</dbReference>
<dbReference type="EMBL" id="AF060923">
    <property type="protein sequence ID" value="AAG43135.1"/>
    <property type="molecule type" value="mRNA"/>
</dbReference>
<dbReference type="EMBL" id="AL136713">
    <property type="protein sequence ID" value="CAB66648.1"/>
    <property type="molecule type" value="mRNA"/>
</dbReference>
<dbReference type="EMBL" id="AY358824">
    <property type="protein sequence ID" value="AAQ89183.1"/>
    <property type="molecule type" value="mRNA"/>
</dbReference>
<dbReference type="EMBL" id="AK292864">
    <property type="protein sequence ID" value="BAF85553.1"/>
    <property type="molecule type" value="mRNA"/>
</dbReference>
<dbReference type="EMBL" id="AC022389">
    <property type="status" value="NOT_ANNOTATED_CDS"/>
    <property type="molecule type" value="Genomic_DNA"/>
</dbReference>
<dbReference type="EMBL" id="AL603756">
    <property type="status" value="NOT_ANNOTATED_CDS"/>
    <property type="molecule type" value="Genomic_DNA"/>
</dbReference>
<dbReference type="EMBL" id="CH471142">
    <property type="protein sequence ID" value="EAW80367.1"/>
    <property type="molecule type" value="Genomic_DNA"/>
</dbReference>
<dbReference type="EMBL" id="CH471142">
    <property type="protein sequence ID" value="EAW80368.1"/>
    <property type="molecule type" value="Genomic_DNA"/>
</dbReference>
<dbReference type="EMBL" id="CH471142">
    <property type="protein sequence ID" value="EAW80369.1"/>
    <property type="molecule type" value="Genomic_DNA"/>
</dbReference>
<dbReference type="EMBL" id="BC010354">
    <property type="protein sequence ID" value="AAH10354.1"/>
    <property type="molecule type" value="mRNA"/>
</dbReference>
<dbReference type="CCDS" id="CCDS41542.1"/>
<dbReference type="RefSeq" id="NP_055209.2">
    <property type="nucleotide sequence ID" value="NM_014394.3"/>
</dbReference>
<dbReference type="BioGRID" id="117980">
    <property type="interactions" value="169"/>
</dbReference>
<dbReference type="FunCoup" id="Q9H3K2">
    <property type="interactions" value="1201"/>
</dbReference>
<dbReference type="IntAct" id="Q9H3K2">
    <property type="interactions" value="120"/>
</dbReference>
<dbReference type="MINT" id="Q9H3K2"/>
<dbReference type="STRING" id="9606.ENSP00000361207"/>
<dbReference type="GlyGen" id="Q9H3K2">
    <property type="glycosylation" value="1 site, 1 O-linked glycan (1 site)"/>
</dbReference>
<dbReference type="iPTMnet" id="Q9H3K2"/>
<dbReference type="MetOSite" id="Q9H3K2"/>
<dbReference type="PhosphoSitePlus" id="Q9H3K2"/>
<dbReference type="SwissPalm" id="Q9H3K2"/>
<dbReference type="BioMuta" id="GHITM"/>
<dbReference type="DMDM" id="15213977"/>
<dbReference type="jPOST" id="Q9H3K2"/>
<dbReference type="MassIVE" id="Q9H3K2"/>
<dbReference type="PaxDb" id="9606-ENSP00000361207"/>
<dbReference type="PeptideAtlas" id="Q9H3K2"/>
<dbReference type="ProteomicsDB" id="80725"/>
<dbReference type="Pumba" id="Q9H3K2"/>
<dbReference type="TopDownProteomics" id="Q9H3K2"/>
<dbReference type="Antibodypedia" id="8062">
    <property type="antibodies" value="232 antibodies from 32 providers"/>
</dbReference>
<dbReference type="DNASU" id="27069"/>
<dbReference type="Ensembl" id="ENST00000372134.6">
    <property type="protein sequence ID" value="ENSP00000361207.3"/>
    <property type="gene ID" value="ENSG00000165678.22"/>
</dbReference>
<dbReference type="Ensembl" id="ENST00000686247.1">
    <property type="protein sequence ID" value="ENSP00000509112.1"/>
    <property type="gene ID" value="ENSG00000165678.22"/>
</dbReference>
<dbReference type="Ensembl" id="ENST00000686583.1">
    <property type="protein sequence ID" value="ENSP00000510236.1"/>
    <property type="gene ID" value="ENSG00000165678.22"/>
</dbReference>
<dbReference type="Ensembl" id="ENST00000687085.1">
    <property type="protein sequence ID" value="ENSP00000510576.1"/>
    <property type="gene ID" value="ENSG00000165678.22"/>
</dbReference>
<dbReference type="Ensembl" id="ENST00000688802.1">
    <property type="protein sequence ID" value="ENSP00000509674.1"/>
    <property type="gene ID" value="ENSG00000165678.22"/>
</dbReference>
<dbReference type="Ensembl" id="ENST00000690067.1">
    <property type="protein sequence ID" value="ENSP00000508495.1"/>
    <property type="gene ID" value="ENSG00000165678.22"/>
</dbReference>
<dbReference type="Ensembl" id="ENST00000690283.1">
    <property type="protein sequence ID" value="ENSP00000508559.1"/>
    <property type="gene ID" value="ENSG00000165678.22"/>
</dbReference>
<dbReference type="Ensembl" id="ENST00000690920.1">
    <property type="protein sequence ID" value="ENSP00000509697.1"/>
    <property type="gene ID" value="ENSG00000165678.22"/>
</dbReference>
<dbReference type="Ensembl" id="ENST00000691155.1">
    <property type="protein sequence ID" value="ENSP00000510216.1"/>
    <property type="gene ID" value="ENSG00000165678.22"/>
</dbReference>
<dbReference type="Ensembl" id="ENST00000691609.1">
    <property type="protein sequence ID" value="ENSP00000509708.1"/>
    <property type="gene ID" value="ENSG00000165678.22"/>
</dbReference>
<dbReference type="GeneID" id="27069"/>
<dbReference type="KEGG" id="hsa:27069"/>
<dbReference type="MANE-Select" id="ENST00000372134.6">
    <property type="protein sequence ID" value="ENSP00000361207.3"/>
    <property type="RefSeq nucleotide sequence ID" value="NM_014394.3"/>
    <property type="RefSeq protein sequence ID" value="NP_055209.2"/>
</dbReference>
<dbReference type="UCSC" id="uc001kcs.2">
    <property type="organism name" value="human"/>
</dbReference>
<dbReference type="AGR" id="HGNC:17281"/>
<dbReference type="CTD" id="27069"/>
<dbReference type="DisGeNET" id="27069"/>
<dbReference type="GeneCards" id="GHITM"/>
<dbReference type="HGNC" id="HGNC:17281">
    <property type="gene designation" value="GHITM"/>
</dbReference>
<dbReference type="HPA" id="ENSG00000165678">
    <property type="expression patterns" value="Low tissue specificity"/>
</dbReference>
<dbReference type="MIM" id="619205">
    <property type="type" value="gene"/>
</dbReference>
<dbReference type="neXtProt" id="NX_Q9H3K2"/>
<dbReference type="OpenTargets" id="ENSG00000165678"/>
<dbReference type="PharmGKB" id="PA28673"/>
<dbReference type="VEuPathDB" id="HostDB:ENSG00000165678"/>
<dbReference type="eggNOG" id="KOG1630">
    <property type="taxonomic scope" value="Eukaryota"/>
</dbReference>
<dbReference type="GeneTree" id="ENSGT01050000244940"/>
<dbReference type="HOGENOM" id="CLU_050797_1_0_1"/>
<dbReference type="InParanoid" id="Q9H3K2"/>
<dbReference type="OMA" id="TLMWSER"/>
<dbReference type="OrthoDB" id="6285520at2759"/>
<dbReference type="PAN-GO" id="Q9H3K2">
    <property type="GO annotations" value="2 GO annotations based on evolutionary models"/>
</dbReference>
<dbReference type="PhylomeDB" id="Q9H3K2"/>
<dbReference type="TreeFam" id="TF314017"/>
<dbReference type="PathwayCommons" id="Q9H3K2"/>
<dbReference type="SignaLink" id="Q9H3K2"/>
<dbReference type="SIGNOR" id="Q9H3K2"/>
<dbReference type="BioGRID-ORCS" id="27069">
    <property type="hits" value="9 hits in 1163 CRISPR screens"/>
</dbReference>
<dbReference type="ChiTaRS" id="GHITM">
    <property type="organism name" value="human"/>
</dbReference>
<dbReference type="GeneWiki" id="GHITM"/>
<dbReference type="GenomeRNAi" id="27069"/>
<dbReference type="Pharos" id="Q9H3K2">
    <property type="development level" value="Tbio"/>
</dbReference>
<dbReference type="PRO" id="PR:Q9H3K2"/>
<dbReference type="Proteomes" id="UP000005640">
    <property type="component" value="Chromosome 10"/>
</dbReference>
<dbReference type="RNAct" id="Q9H3K2">
    <property type="molecule type" value="protein"/>
</dbReference>
<dbReference type="Bgee" id="ENSG00000165678">
    <property type="expression patterns" value="Expressed in sperm and 205 other cell types or tissues"/>
</dbReference>
<dbReference type="GO" id="GO:0005789">
    <property type="term" value="C:endoplasmic reticulum membrane"/>
    <property type="evidence" value="ECO:0000314"/>
    <property type="project" value="FlyBase"/>
</dbReference>
<dbReference type="GO" id="GO:0070062">
    <property type="term" value="C:extracellular exosome"/>
    <property type="evidence" value="ECO:0007005"/>
    <property type="project" value="UniProtKB"/>
</dbReference>
<dbReference type="GO" id="GO:0005743">
    <property type="term" value="C:mitochondrial inner membrane"/>
    <property type="evidence" value="ECO:0000314"/>
    <property type="project" value="FlyBase"/>
</dbReference>
<dbReference type="GO" id="GO:0031966">
    <property type="term" value="C:mitochondrial membrane"/>
    <property type="evidence" value="ECO:0000314"/>
    <property type="project" value="FlyBase"/>
</dbReference>
<dbReference type="GO" id="GO:0005739">
    <property type="term" value="C:mitochondrion"/>
    <property type="evidence" value="ECO:0000314"/>
    <property type="project" value="HPA"/>
</dbReference>
<dbReference type="GO" id="GO:0005262">
    <property type="term" value="F:calcium channel activity"/>
    <property type="evidence" value="ECO:0000318"/>
    <property type="project" value="GO_Central"/>
</dbReference>
<dbReference type="GO" id="GO:0015369">
    <property type="term" value="F:calcium:proton antiporter activity"/>
    <property type="evidence" value="ECO:0000315"/>
    <property type="project" value="UniProtKB"/>
</dbReference>
<dbReference type="GO" id="GO:0006915">
    <property type="term" value="P:apoptotic process"/>
    <property type="evidence" value="ECO:0007669"/>
    <property type="project" value="UniProtKB-KW"/>
</dbReference>
<dbReference type="GO" id="GO:0099093">
    <property type="term" value="P:calcium export from the mitochondrion"/>
    <property type="evidence" value="ECO:0000315"/>
    <property type="project" value="UniProtKB"/>
</dbReference>
<dbReference type="GO" id="GO:0006816">
    <property type="term" value="P:calcium ion transport"/>
    <property type="evidence" value="ECO:0000315"/>
    <property type="project" value="UniProtKB"/>
</dbReference>
<dbReference type="GO" id="GO:0007007">
    <property type="term" value="P:inner mitochondrial membrane organization"/>
    <property type="evidence" value="ECO:0000315"/>
    <property type="project" value="UniProtKB"/>
</dbReference>
<dbReference type="GO" id="GO:0006851">
    <property type="term" value="P:mitochondrial calcium ion transmembrane transport"/>
    <property type="evidence" value="ECO:0000315"/>
    <property type="project" value="UniProtKB"/>
</dbReference>
<dbReference type="GO" id="GO:0140141">
    <property type="term" value="P:mitochondrial potassium ion transmembrane transport"/>
    <property type="evidence" value="ECO:0007669"/>
    <property type="project" value="Ensembl"/>
</dbReference>
<dbReference type="GO" id="GO:0090201">
    <property type="term" value="P:negative regulation of release of cytochrome c from mitochondria"/>
    <property type="evidence" value="ECO:0000315"/>
    <property type="project" value="FlyBase"/>
</dbReference>
<dbReference type="GO" id="GO:1905448">
    <property type="term" value="P:positive regulation of mitochondrial ATP synthesis coupled electron transport"/>
    <property type="evidence" value="ECO:0000250"/>
    <property type="project" value="FlyBase"/>
</dbReference>
<dbReference type="CDD" id="cd10431">
    <property type="entry name" value="GHITM"/>
    <property type="match status" value="1"/>
</dbReference>
<dbReference type="InterPro" id="IPR006214">
    <property type="entry name" value="Bax_inhibitor_1-related"/>
</dbReference>
<dbReference type="InterPro" id="IPR035871">
    <property type="entry name" value="GHITM"/>
</dbReference>
<dbReference type="PANTHER" id="PTHR23291">
    <property type="entry name" value="BAX INHIBITOR-RELATED"/>
    <property type="match status" value="1"/>
</dbReference>
<dbReference type="PANTHER" id="PTHR23291:SF112">
    <property type="entry name" value="GROWTH HORMONE-INDUCIBLE TRANSMEMBRANE PROTEIN"/>
    <property type="match status" value="1"/>
</dbReference>
<dbReference type="Pfam" id="PF01027">
    <property type="entry name" value="Bax1-I"/>
    <property type="match status" value="1"/>
</dbReference>
<reference key="1">
    <citation type="submission" date="1997-12" db="EMBL/GenBank/DDBJ databases">
        <title>Molecular cloning of a dermal papilla derived gene.</title>
        <authorList>
            <person name="Ikeda A."/>
            <person name="Yamashita M."/>
            <person name="Yoshimoto M."/>
        </authorList>
    </citation>
    <scope>NUCLEOTIDE SEQUENCE [MRNA]</scope>
    <source>
        <tissue>Hair follicle dermal papilla</tissue>
    </source>
</reference>
<reference key="2">
    <citation type="submission" date="1999-02" db="EMBL/GenBank/DDBJ databases">
        <authorList>
            <person name="Mei G."/>
            <person name="Yu W."/>
            <person name="Gibbs R.A."/>
        </authorList>
    </citation>
    <scope>NUCLEOTIDE SEQUENCE [LARGE SCALE MRNA]</scope>
    <source>
        <tissue>Brain</tissue>
    </source>
</reference>
<reference key="3">
    <citation type="submission" date="1998-04" db="EMBL/GenBank/DDBJ databases">
        <authorList>
            <person name="Mao Y.M."/>
            <person name="Xie Y."/>
            <person name="Mu Z.M."/>
            <person name="Li Y."/>
            <person name="Huang Y."/>
        </authorList>
    </citation>
    <scope>NUCLEOTIDE SEQUENCE [LARGE SCALE MRNA]</scope>
    <source>
        <tissue>Fetal brain</tissue>
    </source>
</reference>
<reference key="4">
    <citation type="journal article" date="2001" name="Genome Res.">
        <title>Towards a catalog of human genes and proteins: sequencing and analysis of 500 novel complete protein coding human cDNAs.</title>
        <authorList>
            <person name="Wiemann S."/>
            <person name="Weil B."/>
            <person name="Wellenreuther R."/>
            <person name="Gassenhuber J."/>
            <person name="Glassl S."/>
            <person name="Ansorge W."/>
            <person name="Boecher M."/>
            <person name="Bloecker H."/>
            <person name="Bauersachs S."/>
            <person name="Blum H."/>
            <person name="Lauber J."/>
            <person name="Duesterhoeft A."/>
            <person name="Beyer A."/>
            <person name="Koehrer K."/>
            <person name="Strack N."/>
            <person name="Mewes H.-W."/>
            <person name="Ottenwaelder B."/>
            <person name="Obermaier B."/>
            <person name="Tampe J."/>
            <person name="Heubner D."/>
            <person name="Wambutt R."/>
            <person name="Korn B."/>
            <person name="Klein M."/>
            <person name="Poustka A."/>
        </authorList>
    </citation>
    <scope>NUCLEOTIDE SEQUENCE [LARGE SCALE MRNA]</scope>
    <source>
        <tissue>Kidney</tissue>
    </source>
</reference>
<reference key="5">
    <citation type="journal article" date="2003" name="Genome Res.">
        <title>The secreted protein discovery initiative (SPDI), a large-scale effort to identify novel human secreted and transmembrane proteins: a bioinformatics assessment.</title>
        <authorList>
            <person name="Clark H.F."/>
            <person name="Gurney A.L."/>
            <person name="Abaya E."/>
            <person name="Baker K."/>
            <person name="Baldwin D.T."/>
            <person name="Brush J."/>
            <person name="Chen J."/>
            <person name="Chow B."/>
            <person name="Chui C."/>
            <person name="Crowley C."/>
            <person name="Currell B."/>
            <person name="Deuel B."/>
            <person name="Dowd P."/>
            <person name="Eaton D."/>
            <person name="Foster J.S."/>
            <person name="Grimaldi C."/>
            <person name="Gu Q."/>
            <person name="Hass P.E."/>
            <person name="Heldens S."/>
            <person name="Huang A."/>
            <person name="Kim H.S."/>
            <person name="Klimowski L."/>
            <person name="Jin Y."/>
            <person name="Johnson S."/>
            <person name="Lee J."/>
            <person name="Lewis L."/>
            <person name="Liao D."/>
            <person name="Mark M.R."/>
            <person name="Robbie E."/>
            <person name="Sanchez C."/>
            <person name="Schoenfeld J."/>
            <person name="Seshagiri S."/>
            <person name="Simmons L."/>
            <person name="Singh J."/>
            <person name="Smith V."/>
            <person name="Stinson J."/>
            <person name="Vagts A."/>
            <person name="Vandlen R.L."/>
            <person name="Watanabe C."/>
            <person name="Wieand D."/>
            <person name="Woods K."/>
            <person name="Xie M.-H."/>
            <person name="Yansura D.G."/>
            <person name="Yi S."/>
            <person name="Yu G."/>
            <person name="Yuan J."/>
            <person name="Zhang M."/>
            <person name="Zhang Z."/>
            <person name="Goddard A.D."/>
            <person name="Wood W.I."/>
            <person name="Godowski P.J."/>
            <person name="Gray A.M."/>
        </authorList>
    </citation>
    <scope>NUCLEOTIDE SEQUENCE [LARGE SCALE MRNA]</scope>
</reference>
<reference key="6">
    <citation type="journal article" date="2004" name="Nat. Genet.">
        <title>Complete sequencing and characterization of 21,243 full-length human cDNAs.</title>
        <authorList>
            <person name="Ota T."/>
            <person name="Suzuki Y."/>
            <person name="Nishikawa T."/>
            <person name="Otsuki T."/>
            <person name="Sugiyama T."/>
            <person name="Irie R."/>
            <person name="Wakamatsu A."/>
            <person name="Hayashi K."/>
            <person name="Sato H."/>
            <person name="Nagai K."/>
            <person name="Kimura K."/>
            <person name="Makita H."/>
            <person name="Sekine M."/>
            <person name="Obayashi M."/>
            <person name="Nishi T."/>
            <person name="Shibahara T."/>
            <person name="Tanaka T."/>
            <person name="Ishii S."/>
            <person name="Yamamoto J."/>
            <person name="Saito K."/>
            <person name="Kawai Y."/>
            <person name="Isono Y."/>
            <person name="Nakamura Y."/>
            <person name="Nagahari K."/>
            <person name="Murakami K."/>
            <person name="Yasuda T."/>
            <person name="Iwayanagi T."/>
            <person name="Wagatsuma M."/>
            <person name="Shiratori A."/>
            <person name="Sudo H."/>
            <person name="Hosoiri T."/>
            <person name="Kaku Y."/>
            <person name="Kodaira H."/>
            <person name="Kondo H."/>
            <person name="Sugawara M."/>
            <person name="Takahashi M."/>
            <person name="Kanda K."/>
            <person name="Yokoi T."/>
            <person name="Furuya T."/>
            <person name="Kikkawa E."/>
            <person name="Omura Y."/>
            <person name="Abe K."/>
            <person name="Kamihara K."/>
            <person name="Katsuta N."/>
            <person name="Sato K."/>
            <person name="Tanikawa M."/>
            <person name="Yamazaki M."/>
            <person name="Ninomiya K."/>
            <person name="Ishibashi T."/>
            <person name="Yamashita H."/>
            <person name="Murakawa K."/>
            <person name="Fujimori K."/>
            <person name="Tanai H."/>
            <person name="Kimata M."/>
            <person name="Watanabe M."/>
            <person name="Hiraoka S."/>
            <person name="Chiba Y."/>
            <person name="Ishida S."/>
            <person name="Ono Y."/>
            <person name="Takiguchi S."/>
            <person name="Watanabe S."/>
            <person name="Yosida M."/>
            <person name="Hotuta T."/>
            <person name="Kusano J."/>
            <person name="Kanehori K."/>
            <person name="Takahashi-Fujii A."/>
            <person name="Hara H."/>
            <person name="Tanase T.-O."/>
            <person name="Nomura Y."/>
            <person name="Togiya S."/>
            <person name="Komai F."/>
            <person name="Hara R."/>
            <person name="Takeuchi K."/>
            <person name="Arita M."/>
            <person name="Imose N."/>
            <person name="Musashino K."/>
            <person name="Yuuki H."/>
            <person name="Oshima A."/>
            <person name="Sasaki N."/>
            <person name="Aotsuka S."/>
            <person name="Yoshikawa Y."/>
            <person name="Matsunawa H."/>
            <person name="Ichihara T."/>
            <person name="Shiohata N."/>
            <person name="Sano S."/>
            <person name="Moriya S."/>
            <person name="Momiyama H."/>
            <person name="Satoh N."/>
            <person name="Takami S."/>
            <person name="Terashima Y."/>
            <person name="Suzuki O."/>
            <person name="Nakagawa S."/>
            <person name="Senoh A."/>
            <person name="Mizoguchi H."/>
            <person name="Goto Y."/>
            <person name="Shimizu F."/>
            <person name="Wakebe H."/>
            <person name="Hishigaki H."/>
            <person name="Watanabe T."/>
            <person name="Sugiyama A."/>
            <person name="Takemoto M."/>
            <person name="Kawakami B."/>
            <person name="Yamazaki M."/>
            <person name="Watanabe K."/>
            <person name="Kumagai A."/>
            <person name="Itakura S."/>
            <person name="Fukuzumi Y."/>
            <person name="Fujimori Y."/>
            <person name="Komiyama M."/>
            <person name="Tashiro H."/>
            <person name="Tanigami A."/>
            <person name="Fujiwara T."/>
            <person name="Ono T."/>
            <person name="Yamada K."/>
            <person name="Fujii Y."/>
            <person name="Ozaki K."/>
            <person name="Hirao M."/>
            <person name="Ohmori Y."/>
            <person name="Kawabata A."/>
            <person name="Hikiji T."/>
            <person name="Kobatake N."/>
            <person name="Inagaki H."/>
            <person name="Ikema Y."/>
            <person name="Okamoto S."/>
            <person name="Okitani R."/>
            <person name="Kawakami T."/>
            <person name="Noguchi S."/>
            <person name="Itoh T."/>
            <person name="Shigeta K."/>
            <person name="Senba T."/>
            <person name="Matsumura K."/>
            <person name="Nakajima Y."/>
            <person name="Mizuno T."/>
            <person name="Morinaga M."/>
            <person name="Sasaki M."/>
            <person name="Togashi T."/>
            <person name="Oyama M."/>
            <person name="Hata H."/>
            <person name="Watanabe M."/>
            <person name="Komatsu T."/>
            <person name="Mizushima-Sugano J."/>
            <person name="Satoh T."/>
            <person name="Shirai Y."/>
            <person name="Takahashi Y."/>
            <person name="Nakagawa K."/>
            <person name="Okumura K."/>
            <person name="Nagase T."/>
            <person name="Nomura N."/>
            <person name="Kikuchi H."/>
            <person name="Masuho Y."/>
            <person name="Yamashita R."/>
            <person name="Nakai K."/>
            <person name="Yada T."/>
            <person name="Nakamura Y."/>
            <person name="Ohara O."/>
            <person name="Isogai T."/>
            <person name="Sugano S."/>
        </authorList>
    </citation>
    <scope>NUCLEOTIDE SEQUENCE [LARGE SCALE MRNA]</scope>
    <source>
        <tissue>Trachea</tissue>
    </source>
</reference>
<reference key="7">
    <citation type="journal article" date="2004" name="Nature">
        <title>The DNA sequence and comparative analysis of human chromosome 10.</title>
        <authorList>
            <person name="Deloukas P."/>
            <person name="Earthrowl M.E."/>
            <person name="Grafham D.V."/>
            <person name="Rubenfield M."/>
            <person name="French L."/>
            <person name="Steward C.A."/>
            <person name="Sims S.K."/>
            <person name="Jones M.C."/>
            <person name="Searle S."/>
            <person name="Scott C."/>
            <person name="Howe K."/>
            <person name="Hunt S.E."/>
            <person name="Andrews T.D."/>
            <person name="Gilbert J.G.R."/>
            <person name="Swarbreck D."/>
            <person name="Ashurst J.L."/>
            <person name="Taylor A."/>
            <person name="Battles J."/>
            <person name="Bird C.P."/>
            <person name="Ainscough R."/>
            <person name="Almeida J.P."/>
            <person name="Ashwell R.I.S."/>
            <person name="Ambrose K.D."/>
            <person name="Babbage A.K."/>
            <person name="Bagguley C.L."/>
            <person name="Bailey J."/>
            <person name="Banerjee R."/>
            <person name="Bates K."/>
            <person name="Beasley H."/>
            <person name="Bray-Allen S."/>
            <person name="Brown A.J."/>
            <person name="Brown J.Y."/>
            <person name="Burford D.C."/>
            <person name="Burrill W."/>
            <person name="Burton J."/>
            <person name="Cahill P."/>
            <person name="Camire D."/>
            <person name="Carter N.P."/>
            <person name="Chapman J.C."/>
            <person name="Clark S.Y."/>
            <person name="Clarke G."/>
            <person name="Clee C.M."/>
            <person name="Clegg S."/>
            <person name="Corby N."/>
            <person name="Coulson A."/>
            <person name="Dhami P."/>
            <person name="Dutta I."/>
            <person name="Dunn M."/>
            <person name="Faulkner L."/>
            <person name="Frankish A."/>
            <person name="Frankland J.A."/>
            <person name="Garner P."/>
            <person name="Garnett J."/>
            <person name="Gribble S."/>
            <person name="Griffiths C."/>
            <person name="Grocock R."/>
            <person name="Gustafson E."/>
            <person name="Hammond S."/>
            <person name="Harley J.L."/>
            <person name="Hart E."/>
            <person name="Heath P.D."/>
            <person name="Ho T.P."/>
            <person name="Hopkins B."/>
            <person name="Horne J."/>
            <person name="Howden P.J."/>
            <person name="Huckle E."/>
            <person name="Hynds C."/>
            <person name="Johnson C."/>
            <person name="Johnson D."/>
            <person name="Kana A."/>
            <person name="Kay M."/>
            <person name="Kimberley A.M."/>
            <person name="Kershaw J.K."/>
            <person name="Kokkinaki M."/>
            <person name="Laird G.K."/>
            <person name="Lawlor S."/>
            <person name="Lee H.M."/>
            <person name="Leongamornlert D.A."/>
            <person name="Laird G."/>
            <person name="Lloyd C."/>
            <person name="Lloyd D.M."/>
            <person name="Loveland J."/>
            <person name="Lovell J."/>
            <person name="McLaren S."/>
            <person name="McLay K.E."/>
            <person name="McMurray A."/>
            <person name="Mashreghi-Mohammadi M."/>
            <person name="Matthews L."/>
            <person name="Milne S."/>
            <person name="Nickerson T."/>
            <person name="Nguyen M."/>
            <person name="Overton-Larty E."/>
            <person name="Palmer S.A."/>
            <person name="Pearce A.V."/>
            <person name="Peck A.I."/>
            <person name="Pelan S."/>
            <person name="Phillimore B."/>
            <person name="Porter K."/>
            <person name="Rice C.M."/>
            <person name="Rogosin A."/>
            <person name="Ross M.T."/>
            <person name="Sarafidou T."/>
            <person name="Sehra H.K."/>
            <person name="Shownkeen R."/>
            <person name="Skuce C.D."/>
            <person name="Smith M."/>
            <person name="Standring L."/>
            <person name="Sycamore N."/>
            <person name="Tester J."/>
            <person name="Thorpe A."/>
            <person name="Torcasso W."/>
            <person name="Tracey A."/>
            <person name="Tromans A."/>
            <person name="Tsolas J."/>
            <person name="Wall M."/>
            <person name="Walsh J."/>
            <person name="Wang H."/>
            <person name="Weinstock K."/>
            <person name="West A.P."/>
            <person name="Willey D.L."/>
            <person name="Whitehead S.L."/>
            <person name="Wilming L."/>
            <person name="Wray P.W."/>
            <person name="Young L."/>
            <person name="Chen Y."/>
            <person name="Lovering R.C."/>
            <person name="Moschonas N.K."/>
            <person name="Siebert R."/>
            <person name="Fechtel K."/>
            <person name="Bentley D."/>
            <person name="Durbin R.M."/>
            <person name="Hubbard T."/>
            <person name="Doucette-Stamm L."/>
            <person name="Beck S."/>
            <person name="Smith D.R."/>
            <person name="Rogers J."/>
        </authorList>
    </citation>
    <scope>NUCLEOTIDE SEQUENCE [LARGE SCALE GENOMIC DNA]</scope>
</reference>
<reference key="8">
    <citation type="submission" date="2005-09" db="EMBL/GenBank/DDBJ databases">
        <authorList>
            <person name="Mural R.J."/>
            <person name="Istrail S."/>
            <person name="Sutton G.G."/>
            <person name="Florea L."/>
            <person name="Halpern A.L."/>
            <person name="Mobarry C.M."/>
            <person name="Lippert R."/>
            <person name="Walenz B."/>
            <person name="Shatkay H."/>
            <person name="Dew I."/>
            <person name="Miller J.R."/>
            <person name="Flanigan M.J."/>
            <person name="Edwards N.J."/>
            <person name="Bolanos R."/>
            <person name="Fasulo D."/>
            <person name="Halldorsson B.V."/>
            <person name="Hannenhalli S."/>
            <person name="Turner R."/>
            <person name="Yooseph S."/>
            <person name="Lu F."/>
            <person name="Nusskern D.R."/>
            <person name="Shue B.C."/>
            <person name="Zheng X.H."/>
            <person name="Zhong F."/>
            <person name="Delcher A.L."/>
            <person name="Huson D.H."/>
            <person name="Kravitz S.A."/>
            <person name="Mouchard L."/>
            <person name="Reinert K."/>
            <person name="Remington K.A."/>
            <person name="Clark A.G."/>
            <person name="Waterman M.S."/>
            <person name="Eichler E.E."/>
            <person name="Adams M.D."/>
            <person name="Hunkapiller M.W."/>
            <person name="Myers E.W."/>
            <person name="Venter J.C."/>
        </authorList>
    </citation>
    <scope>NUCLEOTIDE SEQUENCE [LARGE SCALE GENOMIC DNA]</scope>
</reference>
<reference key="9">
    <citation type="journal article" date="2004" name="Genome Res.">
        <title>The status, quality, and expansion of the NIH full-length cDNA project: the Mammalian Gene Collection (MGC).</title>
        <authorList>
            <consortium name="The MGC Project Team"/>
        </authorList>
    </citation>
    <scope>NUCLEOTIDE SEQUENCE [LARGE SCALE MRNA]</scope>
    <source>
        <tissue>Urinary bladder</tissue>
    </source>
</reference>
<reference key="10">
    <citation type="journal article" date="2008" name="Mol. Biol. Cell">
        <title>Identification of a novel protein MICS1 that is involved in maintenance of mitochondrial morphology and apoptotic release of cytochrome c.</title>
        <authorList>
            <person name="Oka T."/>
            <person name="Sayano T."/>
            <person name="Tamai S."/>
            <person name="Yokota S."/>
            <person name="Kato H."/>
            <person name="Fujii G."/>
            <person name="Mihara K."/>
        </authorList>
    </citation>
    <scope>FUNCTION</scope>
    <scope>SUBCELLULAR LOCATION</scope>
    <scope>MEMBRANE TOPOLOGY</scope>
</reference>
<reference key="11">
    <citation type="journal article" date="2011" name="BMC Syst. Biol.">
        <title>Initial characterization of the human central proteome.</title>
        <authorList>
            <person name="Burkard T.R."/>
            <person name="Planyavsky M."/>
            <person name="Kaupe I."/>
            <person name="Breitwieser F.P."/>
            <person name="Buerckstuemmer T."/>
            <person name="Bennett K.L."/>
            <person name="Superti-Furga G."/>
            <person name="Colinge J."/>
        </authorList>
    </citation>
    <scope>IDENTIFICATION BY MASS SPECTROMETRY [LARGE SCALE ANALYSIS]</scope>
</reference>
<reference key="12">
    <citation type="journal article" date="2015" name="Proteomics">
        <title>N-terminome analysis of the human mitochondrial proteome.</title>
        <authorList>
            <person name="Vaca Jacome A.S."/>
            <person name="Rabilloud T."/>
            <person name="Schaeffer-Reiss C."/>
            <person name="Rompais M."/>
            <person name="Ayoub D."/>
            <person name="Lane L."/>
            <person name="Bairoch A."/>
            <person name="Van Dorsselaer A."/>
            <person name="Carapito C."/>
        </authorList>
    </citation>
    <scope>IDENTIFICATION BY MASS SPECTROMETRY [LARGE SCALE ANALYSIS]</scope>
</reference>
<reference key="13">
    <citation type="journal article" date="2020" name="Cells">
        <title>Transmembrane BAX Inhibitor-1 Motif Containing Protein 5 (TMBIM5) Sustains Mitochondrial Structure, Shape, and Function by Impacting the Mitochondrial Protein Synthesis Machinery.</title>
        <authorList>
            <person name="Seitaj B."/>
            <person name="Maull F."/>
            <person name="Zhang L."/>
            <person name="Wuellner V."/>
            <person name="Wolf C."/>
            <person name="Schippers P."/>
            <person name="La Rovere R."/>
            <person name="Distler U."/>
            <person name="Tenzer S."/>
            <person name="Parys J.B."/>
            <person name="Bultynck G."/>
            <person name="Methner A."/>
        </authorList>
    </citation>
    <scope>FUNCTION</scope>
</reference>
<reference key="14">
    <citation type="journal article" date="2022" name="EMBO Rep.">
        <title>TMBIM5 is the Ca2+ /H+ antiporter of mammalian mitochondria.</title>
        <authorList>
            <person name="Austin S."/>
            <person name="Mekis R."/>
            <person name="Mohammed S.E.M."/>
            <person name="Scalise M."/>
            <person name="Wang W.A."/>
            <person name="Galluccio M."/>
            <person name="Pfeiffer C."/>
            <person name="Borovec T."/>
            <person name="Parapatics K."/>
            <person name="Vitko D."/>
            <person name="Dinhopl N."/>
            <person name="Demaurex N."/>
            <person name="Bennett K.L."/>
            <person name="Indiveri C."/>
            <person name="Nowikovsky K."/>
        </authorList>
    </citation>
    <scope>FUNCTION</scope>
    <scope>TRANSPORTER ACTIVITY</scope>
    <scope>INTERACTION WITH LETM1</scope>
</reference>
<reference key="15">
    <citation type="journal article" date="2022" name="EMBO J.">
        <title>Regulation of mitochondrial proteostasis by the proton gradient.</title>
        <authorList>
            <person name="Patron M."/>
            <person name="Tarasenko D."/>
            <person name="Nolte H."/>
            <person name="Kroczek L."/>
            <person name="Ghosh M."/>
            <person name="Ohba Y."/>
            <person name="Lasarzewski Y."/>
            <person name="Ahmadi Z.A."/>
            <person name="Cabrera-Orefice A."/>
            <person name="Eyiama A."/>
            <person name="Kellermann T."/>
            <person name="Rugarli E.I."/>
            <person name="Brandt U."/>
            <person name="Meinecke M."/>
            <person name="Langer T."/>
        </authorList>
    </citation>
    <scope>FUNCTION</scope>
    <scope>TRANSPORTER ACTIVITY</scope>
    <scope>INTERACTION WITH AFG3L2</scope>
    <scope>PROTEOLYTIC CLEAVAGE</scope>
</reference>
<evidence type="ECO:0000255" key="1"/>
<evidence type="ECO:0000269" key="2">
    <source>
    </source>
</evidence>
<evidence type="ECO:0000269" key="3">
    <source>
    </source>
</evidence>
<evidence type="ECO:0000269" key="4">
    <source>
    </source>
</evidence>
<evidence type="ECO:0000305" key="5"/>
<sequence length="345" mass="37205">MLAARLVCLRTLPSRVFHPAFTKASPVVKNSITKNQWLLTPSREYATKTRIGIRRGRTGQELKEAALEPSMEKIFKIDQMGRWFVAGGAAVGLGALCYYGLGLSNEIGAIEKAVIWPQYVKDRIHSTYMYLAGSIGLTALSAIAISRTPVLMNFMMRGSWVTIGVTFAAMVGAGMLVRSIPYDQSPGPKHLAWLLHSGVMGAVVAPLTILGGPLLIRAAWYTAGIVGGLSTVAMCAPSEKFLNMGAPLGVGLGLVFVSSLGSMFLPPTTVAGATLYSVAMYGGLVLFSMFLLYDTQKVIKRAEVSPMYGVQKYDPINSMLSIYMDTLNIFMRVATMLATGGNRKK</sequence>
<proteinExistence type="evidence at protein level"/>